<reference key="1">
    <citation type="journal article" date="1998" name="Nature">
        <title>Analysis of 1.9 Mb of contiguous sequence from chromosome 4 of Arabidopsis thaliana.</title>
        <authorList>
            <person name="Bevan M."/>
            <person name="Bancroft I."/>
            <person name="Bent E."/>
            <person name="Love K."/>
            <person name="Goodman H.M."/>
            <person name="Dean C."/>
            <person name="Bergkamp R."/>
            <person name="Dirkse W."/>
            <person name="van Staveren M."/>
            <person name="Stiekema W."/>
            <person name="Drost L."/>
            <person name="Ridley P."/>
            <person name="Hudson S.-A."/>
            <person name="Patel K."/>
            <person name="Murphy G."/>
            <person name="Piffanelli P."/>
            <person name="Wedler H."/>
            <person name="Wedler E."/>
            <person name="Wambutt R."/>
            <person name="Weitzenegger T."/>
            <person name="Pohl T."/>
            <person name="Terryn N."/>
            <person name="Gielen J."/>
            <person name="Villarroel R."/>
            <person name="De Clercq R."/>
            <person name="van Montagu M."/>
            <person name="Lecharny A."/>
            <person name="Aubourg S."/>
            <person name="Gy I."/>
            <person name="Kreis M."/>
            <person name="Lao N."/>
            <person name="Kavanagh T."/>
            <person name="Hempel S."/>
            <person name="Kotter P."/>
            <person name="Entian K.-D."/>
            <person name="Rieger M."/>
            <person name="Schaefer M."/>
            <person name="Funk B."/>
            <person name="Mueller-Auer S."/>
            <person name="Silvey M."/>
            <person name="James R."/>
            <person name="Monfort A."/>
            <person name="Pons A."/>
            <person name="Puigdomenech P."/>
            <person name="Douka A."/>
            <person name="Voukelatou E."/>
            <person name="Milioni D."/>
            <person name="Hatzopoulos P."/>
            <person name="Piravandi E."/>
            <person name="Obermaier B."/>
            <person name="Hilbert H."/>
            <person name="Duesterhoeft A."/>
            <person name="Moores T."/>
            <person name="Jones J.D.G."/>
            <person name="Eneva T."/>
            <person name="Palme K."/>
            <person name="Benes V."/>
            <person name="Rechmann S."/>
            <person name="Ansorge W."/>
            <person name="Cooke R."/>
            <person name="Berger C."/>
            <person name="Delseny M."/>
            <person name="Voet M."/>
            <person name="Volckaert G."/>
            <person name="Mewes H.-W."/>
            <person name="Klosterman S."/>
            <person name="Schueller C."/>
            <person name="Chalwatzis N."/>
        </authorList>
    </citation>
    <scope>NUCLEOTIDE SEQUENCE [LARGE SCALE GENOMIC DNA]</scope>
    <source>
        <strain>cv. Columbia</strain>
    </source>
</reference>
<reference key="2">
    <citation type="journal article" date="1999" name="Nature">
        <title>Sequence and analysis of chromosome 4 of the plant Arabidopsis thaliana.</title>
        <authorList>
            <person name="Mayer K.F.X."/>
            <person name="Schueller C."/>
            <person name="Wambutt R."/>
            <person name="Murphy G."/>
            <person name="Volckaert G."/>
            <person name="Pohl T."/>
            <person name="Duesterhoeft A."/>
            <person name="Stiekema W."/>
            <person name="Entian K.-D."/>
            <person name="Terryn N."/>
            <person name="Harris B."/>
            <person name="Ansorge W."/>
            <person name="Brandt P."/>
            <person name="Grivell L.A."/>
            <person name="Rieger M."/>
            <person name="Weichselgartner M."/>
            <person name="de Simone V."/>
            <person name="Obermaier B."/>
            <person name="Mache R."/>
            <person name="Mueller M."/>
            <person name="Kreis M."/>
            <person name="Delseny M."/>
            <person name="Puigdomenech P."/>
            <person name="Watson M."/>
            <person name="Schmidtheini T."/>
            <person name="Reichert B."/>
            <person name="Portetelle D."/>
            <person name="Perez-Alonso M."/>
            <person name="Boutry M."/>
            <person name="Bancroft I."/>
            <person name="Vos P."/>
            <person name="Hoheisel J."/>
            <person name="Zimmermann W."/>
            <person name="Wedler H."/>
            <person name="Ridley P."/>
            <person name="Langham S.-A."/>
            <person name="McCullagh B."/>
            <person name="Bilham L."/>
            <person name="Robben J."/>
            <person name="van der Schueren J."/>
            <person name="Grymonprez B."/>
            <person name="Chuang Y.-J."/>
            <person name="Vandenbussche F."/>
            <person name="Braeken M."/>
            <person name="Weltjens I."/>
            <person name="Voet M."/>
            <person name="Bastiaens I."/>
            <person name="Aert R."/>
            <person name="Defoor E."/>
            <person name="Weitzenegger T."/>
            <person name="Bothe G."/>
            <person name="Ramsperger U."/>
            <person name="Hilbert H."/>
            <person name="Braun M."/>
            <person name="Holzer E."/>
            <person name="Brandt A."/>
            <person name="Peters S."/>
            <person name="van Staveren M."/>
            <person name="Dirkse W."/>
            <person name="Mooijman P."/>
            <person name="Klein Lankhorst R."/>
            <person name="Rose M."/>
            <person name="Hauf J."/>
            <person name="Koetter P."/>
            <person name="Berneiser S."/>
            <person name="Hempel S."/>
            <person name="Feldpausch M."/>
            <person name="Lamberth S."/>
            <person name="Van den Daele H."/>
            <person name="De Keyser A."/>
            <person name="Buysshaert C."/>
            <person name="Gielen J."/>
            <person name="Villarroel R."/>
            <person name="De Clercq R."/>
            <person name="van Montagu M."/>
            <person name="Rogers J."/>
            <person name="Cronin A."/>
            <person name="Quail M.A."/>
            <person name="Bray-Allen S."/>
            <person name="Clark L."/>
            <person name="Doggett J."/>
            <person name="Hall S."/>
            <person name="Kay M."/>
            <person name="Lennard N."/>
            <person name="McLay K."/>
            <person name="Mayes R."/>
            <person name="Pettett A."/>
            <person name="Rajandream M.A."/>
            <person name="Lyne M."/>
            <person name="Benes V."/>
            <person name="Rechmann S."/>
            <person name="Borkova D."/>
            <person name="Bloecker H."/>
            <person name="Scharfe M."/>
            <person name="Grimm M."/>
            <person name="Loehnert T.-H."/>
            <person name="Dose S."/>
            <person name="de Haan M."/>
            <person name="Maarse A.C."/>
            <person name="Schaefer M."/>
            <person name="Mueller-Auer S."/>
            <person name="Gabel C."/>
            <person name="Fuchs M."/>
            <person name="Fartmann B."/>
            <person name="Granderath K."/>
            <person name="Dauner D."/>
            <person name="Herzl A."/>
            <person name="Neumann S."/>
            <person name="Argiriou A."/>
            <person name="Vitale D."/>
            <person name="Liguori R."/>
            <person name="Piravandi E."/>
            <person name="Massenet O."/>
            <person name="Quigley F."/>
            <person name="Clabauld G."/>
            <person name="Muendlein A."/>
            <person name="Felber R."/>
            <person name="Schnabl S."/>
            <person name="Hiller R."/>
            <person name="Schmidt W."/>
            <person name="Lecharny A."/>
            <person name="Aubourg S."/>
            <person name="Chefdor F."/>
            <person name="Cooke R."/>
            <person name="Berger C."/>
            <person name="Monfort A."/>
            <person name="Casacuberta E."/>
            <person name="Gibbons T."/>
            <person name="Weber N."/>
            <person name="Vandenbol M."/>
            <person name="Bargues M."/>
            <person name="Terol J."/>
            <person name="Torres A."/>
            <person name="Perez-Perez A."/>
            <person name="Purnelle B."/>
            <person name="Bent E."/>
            <person name="Johnson S."/>
            <person name="Tacon D."/>
            <person name="Jesse T."/>
            <person name="Heijnen L."/>
            <person name="Schwarz S."/>
            <person name="Scholler P."/>
            <person name="Heber S."/>
            <person name="Francs P."/>
            <person name="Bielke C."/>
            <person name="Frishman D."/>
            <person name="Haase D."/>
            <person name="Lemcke K."/>
            <person name="Mewes H.-W."/>
            <person name="Stocker S."/>
            <person name="Zaccaria P."/>
            <person name="Bevan M."/>
            <person name="Wilson R.K."/>
            <person name="de la Bastide M."/>
            <person name="Habermann K."/>
            <person name="Parnell L."/>
            <person name="Dedhia N."/>
            <person name="Gnoj L."/>
            <person name="Schutz K."/>
            <person name="Huang E."/>
            <person name="Spiegel L."/>
            <person name="Sekhon M."/>
            <person name="Murray J."/>
            <person name="Sheet P."/>
            <person name="Cordes M."/>
            <person name="Abu-Threideh J."/>
            <person name="Stoneking T."/>
            <person name="Kalicki J."/>
            <person name="Graves T."/>
            <person name="Harmon G."/>
            <person name="Edwards J."/>
            <person name="Latreille P."/>
            <person name="Courtney L."/>
            <person name="Cloud J."/>
            <person name="Abbott A."/>
            <person name="Scott K."/>
            <person name="Johnson D."/>
            <person name="Minx P."/>
            <person name="Bentley D."/>
            <person name="Fulton B."/>
            <person name="Miller N."/>
            <person name="Greco T."/>
            <person name="Kemp K."/>
            <person name="Kramer J."/>
            <person name="Fulton L."/>
            <person name="Mardis E."/>
            <person name="Dante M."/>
            <person name="Pepin K."/>
            <person name="Hillier L.W."/>
            <person name="Nelson J."/>
            <person name="Spieth J."/>
            <person name="Ryan E."/>
            <person name="Andrews S."/>
            <person name="Geisel C."/>
            <person name="Layman D."/>
            <person name="Du H."/>
            <person name="Ali J."/>
            <person name="Berghoff A."/>
            <person name="Jones K."/>
            <person name="Drone K."/>
            <person name="Cotton M."/>
            <person name="Joshu C."/>
            <person name="Antonoiu B."/>
            <person name="Zidanic M."/>
            <person name="Strong C."/>
            <person name="Sun H."/>
            <person name="Lamar B."/>
            <person name="Yordan C."/>
            <person name="Ma P."/>
            <person name="Zhong J."/>
            <person name="Preston R."/>
            <person name="Vil D."/>
            <person name="Shekher M."/>
            <person name="Matero A."/>
            <person name="Shah R."/>
            <person name="Swaby I.K."/>
            <person name="O'Shaughnessy A."/>
            <person name="Rodriguez M."/>
            <person name="Hoffman J."/>
            <person name="Till S."/>
            <person name="Granat S."/>
            <person name="Shohdy N."/>
            <person name="Hasegawa A."/>
            <person name="Hameed A."/>
            <person name="Lodhi M."/>
            <person name="Johnson A."/>
            <person name="Chen E."/>
            <person name="Marra M.A."/>
            <person name="Martienssen R."/>
            <person name="McCombie W.R."/>
        </authorList>
    </citation>
    <scope>NUCLEOTIDE SEQUENCE [LARGE SCALE GENOMIC DNA]</scope>
    <source>
        <strain>cv. Columbia</strain>
    </source>
</reference>
<reference key="3">
    <citation type="journal article" date="2017" name="Plant J.">
        <title>Araport11: a complete reannotation of the Arabidopsis thaliana reference genome.</title>
        <authorList>
            <person name="Cheng C.Y."/>
            <person name="Krishnakumar V."/>
            <person name="Chan A.P."/>
            <person name="Thibaud-Nissen F."/>
            <person name="Schobel S."/>
            <person name="Town C.D."/>
        </authorList>
    </citation>
    <scope>GENOME REANNOTATION</scope>
    <source>
        <strain>cv. Columbia</strain>
    </source>
</reference>
<reference key="4">
    <citation type="submission" date="2002-03" db="EMBL/GenBank/DDBJ databases">
        <title>Full-length cDNA from Arabidopsis thaliana.</title>
        <authorList>
            <person name="Brover V.V."/>
            <person name="Troukhan M.E."/>
            <person name="Alexandrov N.A."/>
            <person name="Lu Y.-P."/>
            <person name="Flavell R.B."/>
            <person name="Feldmann K.A."/>
        </authorList>
    </citation>
    <scope>NUCLEOTIDE SEQUENCE [LARGE SCALE MRNA]</scope>
</reference>
<reference key="5">
    <citation type="submission" date="2004-09" db="EMBL/GenBank/DDBJ databases">
        <title>Large-scale analysis of RIKEN Arabidopsis full-length (RAFL) cDNAs.</title>
        <authorList>
            <person name="Totoki Y."/>
            <person name="Seki M."/>
            <person name="Ishida J."/>
            <person name="Nakajima M."/>
            <person name="Enju A."/>
            <person name="Kamiya A."/>
            <person name="Narusaka M."/>
            <person name="Shin-i T."/>
            <person name="Nakagawa M."/>
            <person name="Sakamoto N."/>
            <person name="Oishi K."/>
            <person name="Kohara Y."/>
            <person name="Kobayashi M."/>
            <person name="Toyoda A."/>
            <person name="Sakaki Y."/>
            <person name="Sakurai T."/>
            <person name="Iida K."/>
            <person name="Akiyama K."/>
            <person name="Satou M."/>
            <person name="Toyoda T."/>
            <person name="Konagaya A."/>
            <person name="Carninci P."/>
            <person name="Kawai J."/>
            <person name="Hayashizaki Y."/>
            <person name="Shinozaki K."/>
        </authorList>
    </citation>
    <scope>NUCLEOTIDE SEQUENCE [LARGE SCALE MRNA] OF 7-287</scope>
    <source>
        <strain>cv. Columbia</strain>
    </source>
</reference>
<reference key="6">
    <citation type="journal article" date="2002" name="J. Biol. Chem.">
        <title>Proteome map of the chloroplast lumen of Arabidopsis thaliana.</title>
        <authorList>
            <person name="Schubert M."/>
            <person name="Petersson U.A."/>
            <person name="Haas B.J."/>
            <person name="Funk C."/>
            <person name="Schroeder W.P."/>
            <person name="Kieselbach T."/>
        </authorList>
    </citation>
    <scope>PROTEIN SEQUENCE OF 105-124</scope>
    <scope>SUBCELLULAR LOCATION</scope>
</reference>
<reference key="7">
    <citation type="journal article" date="2007" name="Plant Physiol.">
        <title>Distinct functions for the two PsbP-like proteins PPL1 and PPL2 in the chloroplast thylakoid lumen of Arabidopsis.</title>
        <authorList>
            <person name="Ishihara S."/>
            <person name="Takabayashi A."/>
            <person name="Ido K."/>
            <person name="Endo T."/>
            <person name="Ifuku K."/>
            <person name="Sato F."/>
        </authorList>
    </citation>
    <scope>GENE FAMILY</scope>
    <scope>NOMENCLATURE</scope>
</reference>
<reference key="8">
    <citation type="journal article" date="2008" name="PLoS ONE">
        <title>Sorting signals, N-terminal modifications and abundance of the chloroplast proteome.</title>
        <authorList>
            <person name="Zybailov B."/>
            <person name="Rutschow H."/>
            <person name="Friso G."/>
            <person name="Rudella A."/>
            <person name="Emanuelsson O."/>
            <person name="Sun Q."/>
            <person name="van Wijk K.J."/>
        </authorList>
    </citation>
    <scope>IDENTIFICATION BY MASS SPECTROMETRY</scope>
    <scope>SUBCELLULAR LOCATION [LARGE SCALE ANALYSIS]</scope>
</reference>
<reference key="9">
    <citation type="journal article" date="2012" name="Plant Cell">
        <title>PsbP-domain protein1, a nuclear-encoded thylakoid lumenal protein, is essential for photosystem I assembly in Arabidopsis.</title>
        <authorList>
            <person name="Liu J."/>
            <person name="Yang H."/>
            <person name="Lu Q."/>
            <person name="Wen X."/>
            <person name="Chen F."/>
            <person name="Peng L."/>
            <person name="Zhang L."/>
            <person name="Lu C."/>
        </authorList>
    </citation>
    <scope>FUNCTION</scope>
    <scope>DISRUPTION PHENOTYPE</scope>
    <scope>DEVELOPMENTAL STAGE</scope>
    <scope>SUBCELLULAR LOCATION</scope>
    <scope>SUBUNIT</scope>
    <scope>INTERACTION WITH PSAA AND PASB</scope>
</reference>
<sequence length="287" mass="32266">MASSAFAFPSYIITKGASTDSFKSTSLSSSRSLVTDFHLLFSRPISSGPKYQSAKSAKPESPVAINCLTDAKQVCAVGRRKSMMMGLLMSGLIVSQANLPTAFASTPVFREYIDTFDGYSFKYPQNWIQVRGAGADIFFRDPVVLDENLSVEFSSPSSSNYTSLEDLGSPEEVGKRVLRQYLTEFMSTRLGVKRQANILSTSSRVADDGKLYYQVEVNIKSYANNNELAVMPQDRVARLEWNRRYLAVLGVENDRLYSIRLQTPEKVFLEEEKDLRRVMDSFRVEKI</sequence>
<dbReference type="EMBL" id="Z97339">
    <property type="protein sequence ID" value="CAB10329.1"/>
    <property type="molecule type" value="Genomic_DNA"/>
</dbReference>
<dbReference type="EMBL" id="AL161541">
    <property type="protein sequence ID" value="CAB78593.1"/>
    <property type="molecule type" value="Genomic_DNA"/>
</dbReference>
<dbReference type="EMBL" id="CP002687">
    <property type="protein sequence ID" value="AEE83612.1"/>
    <property type="molecule type" value="Genomic_DNA"/>
</dbReference>
<dbReference type="EMBL" id="CP002687">
    <property type="protein sequence ID" value="AEE83613.1"/>
    <property type="molecule type" value="Genomic_DNA"/>
</dbReference>
<dbReference type="EMBL" id="CP002687">
    <property type="protein sequence ID" value="AEE83614.1"/>
    <property type="molecule type" value="Genomic_DNA"/>
</dbReference>
<dbReference type="EMBL" id="CP002687">
    <property type="protein sequence ID" value="ANM66920.1"/>
    <property type="molecule type" value="Genomic_DNA"/>
</dbReference>
<dbReference type="EMBL" id="CP002687">
    <property type="protein sequence ID" value="ANM66921.1"/>
    <property type="molecule type" value="Genomic_DNA"/>
</dbReference>
<dbReference type="EMBL" id="AY085014">
    <property type="protein sequence ID" value="AAM61572.1"/>
    <property type="molecule type" value="mRNA"/>
</dbReference>
<dbReference type="EMBL" id="AK175561">
    <property type="protein sequence ID" value="BAD43324.1"/>
    <property type="molecule type" value="mRNA"/>
</dbReference>
<dbReference type="PIR" id="G71419">
    <property type="entry name" value="G71419"/>
</dbReference>
<dbReference type="RefSeq" id="NP_001031646.1">
    <molecule id="O23403-3"/>
    <property type="nucleotide sequence ID" value="NM_001036569.3"/>
</dbReference>
<dbReference type="RefSeq" id="NP_001328785.1">
    <molecule id="O23403-3"/>
    <property type="nucleotide sequence ID" value="NM_001341050.1"/>
</dbReference>
<dbReference type="RefSeq" id="NP_001328786.1">
    <molecule id="O23403-3"/>
    <property type="nucleotide sequence ID" value="NM_001341049.1"/>
</dbReference>
<dbReference type="RefSeq" id="NP_567468.1">
    <molecule id="O23403-1"/>
    <property type="nucleotide sequence ID" value="NM_117641.3"/>
</dbReference>
<dbReference type="RefSeq" id="NP_974555.1">
    <molecule id="O23403-2"/>
    <property type="nucleotide sequence ID" value="NM_202826.2"/>
</dbReference>
<dbReference type="SMR" id="O23403"/>
<dbReference type="DIP" id="DIP-58590N"/>
<dbReference type="FunCoup" id="O23403">
    <property type="interactions" value="1276"/>
</dbReference>
<dbReference type="IntAct" id="O23403">
    <property type="interactions" value="1"/>
</dbReference>
<dbReference type="STRING" id="3702.O23403"/>
<dbReference type="iPTMnet" id="O23403"/>
<dbReference type="PaxDb" id="3702-AT4G15510.1"/>
<dbReference type="ProteomicsDB" id="249337">
    <molecule id="O23403-1"/>
</dbReference>
<dbReference type="EnsemblPlants" id="AT4G15510.1">
    <molecule id="O23403-1"/>
    <property type="protein sequence ID" value="AT4G15510.1"/>
    <property type="gene ID" value="AT4G15510"/>
</dbReference>
<dbReference type="EnsemblPlants" id="AT4G15510.2">
    <molecule id="O23403-2"/>
    <property type="protein sequence ID" value="AT4G15510.2"/>
    <property type="gene ID" value="AT4G15510"/>
</dbReference>
<dbReference type="EnsemblPlants" id="AT4G15510.3">
    <molecule id="O23403-3"/>
    <property type="protein sequence ID" value="AT4G15510.3"/>
    <property type="gene ID" value="AT4G15510"/>
</dbReference>
<dbReference type="EnsemblPlants" id="AT4G15510.4">
    <molecule id="O23403-3"/>
    <property type="protein sequence ID" value="AT4G15510.4"/>
    <property type="gene ID" value="AT4G15510"/>
</dbReference>
<dbReference type="EnsemblPlants" id="AT4G15510.5">
    <molecule id="O23403-3"/>
    <property type="protein sequence ID" value="AT4G15510.5"/>
    <property type="gene ID" value="AT4G15510"/>
</dbReference>
<dbReference type="GeneID" id="827223"/>
<dbReference type="Gramene" id="AT4G15510.1">
    <molecule id="O23403-1"/>
    <property type="protein sequence ID" value="AT4G15510.1"/>
    <property type="gene ID" value="AT4G15510"/>
</dbReference>
<dbReference type="Gramene" id="AT4G15510.2">
    <molecule id="O23403-2"/>
    <property type="protein sequence ID" value="AT4G15510.2"/>
    <property type="gene ID" value="AT4G15510"/>
</dbReference>
<dbReference type="Gramene" id="AT4G15510.3">
    <molecule id="O23403-3"/>
    <property type="protein sequence ID" value="AT4G15510.3"/>
    <property type="gene ID" value="AT4G15510"/>
</dbReference>
<dbReference type="Gramene" id="AT4G15510.4">
    <molecule id="O23403-3"/>
    <property type="protein sequence ID" value="AT4G15510.4"/>
    <property type="gene ID" value="AT4G15510"/>
</dbReference>
<dbReference type="Gramene" id="AT4G15510.5">
    <molecule id="O23403-3"/>
    <property type="protein sequence ID" value="AT4G15510.5"/>
    <property type="gene ID" value="AT4G15510"/>
</dbReference>
<dbReference type="KEGG" id="ath:AT4G15510"/>
<dbReference type="Araport" id="AT4G15510"/>
<dbReference type="TAIR" id="AT4G15510">
    <property type="gene designation" value="PPD1"/>
</dbReference>
<dbReference type="eggNOG" id="ENOG502QU0F">
    <property type="taxonomic scope" value="Eukaryota"/>
</dbReference>
<dbReference type="HOGENOM" id="CLU_039569_1_2_1"/>
<dbReference type="InParanoid" id="O23403"/>
<dbReference type="OMA" id="RMYYQVE"/>
<dbReference type="OrthoDB" id="2020255at2759"/>
<dbReference type="PhylomeDB" id="O23403"/>
<dbReference type="BioCyc" id="MetaCyc:AT4G15510-MONOMER"/>
<dbReference type="PRO" id="PR:O23403"/>
<dbReference type="Proteomes" id="UP000006548">
    <property type="component" value="Chromosome 4"/>
</dbReference>
<dbReference type="ExpressionAtlas" id="O23403">
    <property type="expression patterns" value="baseline and differential"/>
</dbReference>
<dbReference type="GO" id="GO:0009507">
    <property type="term" value="C:chloroplast"/>
    <property type="evidence" value="ECO:0007005"/>
    <property type="project" value="TAIR"/>
</dbReference>
<dbReference type="GO" id="GO:0009570">
    <property type="term" value="C:chloroplast stroma"/>
    <property type="evidence" value="ECO:0007005"/>
    <property type="project" value="TAIR"/>
</dbReference>
<dbReference type="GO" id="GO:0009543">
    <property type="term" value="C:chloroplast thylakoid lumen"/>
    <property type="evidence" value="ECO:0000314"/>
    <property type="project" value="TAIR"/>
</dbReference>
<dbReference type="GO" id="GO:0009535">
    <property type="term" value="C:chloroplast thylakoid membrane"/>
    <property type="evidence" value="ECO:0007005"/>
    <property type="project" value="TAIR"/>
</dbReference>
<dbReference type="GO" id="GO:0019898">
    <property type="term" value="C:extrinsic component of membrane"/>
    <property type="evidence" value="ECO:0007669"/>
    <property type="project" value="InterPro"/>
</dbReference>
<dbReference type="GO" id="GO:0009654">
    <property type="term" value="C:photosystem II oxygen evolving complex"/>
    <property type="evidence" value="ECO:0007669"/>
    <property type="project" value="InterPro"/>
</dbReference>
<dbReference type="GO" id="GO:0009579">
    <property type="term" value="C:thylakoid"/>
    <property type="evidence" value="ECO:0007005"/>
    <property type="project" value="TAIR"/>
</dbReference>
<dbReference type="GO" id="GO:0031977">
    <property type="term" value="C:thylakoid lumen"/>
    <property type="evidence" value="ECO:0007005"/>
    <property type="project" value="TAIR"/>
</dbReference>
<dbReference type="GO" id="GO:0005509">
    <property type="term" value="F:calcium ion binding"/>
    <property type="evidence" value="ECO:0007669"/>
    <property type="project" value="InterPro"/>
</dbReference>
<dbReference type="GO" id="GO:0048564">
    <property type="term" value="P:photosystem I assembly"/>
    <property type="evidence" value="ECO:0000315"/>
    <property type="project" value="TAIR"/>
</dbReference>
<dbReference type="FunFam" id="3.40.1000.10:FF:000006">
    <property type="entry name" value="PsbP domain-containing protein 1, chloroplastic"/>
    <property type="match status" value="1"/>
</dbReference>
<dbReference type="Gene3D" id="3.40.1000.10">
    <property type="entry name" value="Mog1/PsbP, alpha/beta/alpha sandwich"/>
    <property type="match status" value="1"/>
</dbReference>
<dbReference type="InterPro" id="IPR016123">
    <property type="entry name" value="Mog1/PsbP_a/b/a-sand"/>
</dbReference>
<dbReference type="InterPro" id="IPR002683">
    <property type="entry name" value="PsbP_C"/>
</dbReference>
<dbReference type="NCBIfam" id="NF040946">
    <property type="entry name" value="PSII_PsbP"/>
    <property type="match status" value="1"/>
</dbReference>
<dbReference type="PANTHER" id="PTHR31407">
    <property type="match status" value="1"/>
</dbReference>
<dbReference type="PANTHER" id="PTHR31407:SF15">
    <property type="entry name" value="PSBP DOMAIN-CONTAINING PROTEIN 1, CHLOROPLASTIC"/>
    <property type="match status" value="1"/>
</dbReference>
<dbReference type="Pfam" id="PF01789">
    <property type="entry name" value="PsbP"/>
    <property type="match status" value="1"/>
</dbReference>
<dbReference type="SUPFAM" id="SSF55724">
    <property type="entry name" value="Mog1p/PsbP-like"/>
    <property type="match status" value="1"/>
</dbReference>
<keyword id="KW-0025">Alternative splicing</keyword>
<keyword id="KW-0150">Chloroplast</keyword>
<keyword id="KW-0903">Direct protein sequencing</keyword>
<keyword id="KW-0934">Plastid</keyword>
<keyword id="KW-1185">Reference proteome</keyword>
<keyword id="KW-0793">Thylakoid</keyword>
<keyword id="KW-0809">Transit peptide</keyword>
<proteinExistence type="evidence at protein level"/>
<comment type="function">
    <text evidence="3">Photosystem I assembly factor that assists the proper folding and integration of PsaB and PsaA into the thylakoid membrane.</text>
</comment>
<comment type="subunit">
    <text evidence="3">Partially associated with photosystem I (PSI) complex, but is not a subunit of the complex. Interacts with PsaA and PsaB, but not with PasF.</text>
</comment>
<comment type="subcellular location">
    <subcellularLocation>
        <location evidence="2 3">Plastid</location>
        <location evidence="2 3">Chloroplast thylakoid lumen</location>
    </subcellularLocation>
    <text evidence="3">Associates primarily with stroma-exposed thylakoids.</text>
</comment>
<comment type="alternative products">
    <event type="alternative splicing"/>
    <isoform>
        <id>O23403-1</id>
        <name>1</name>
        <sequence type="displayed"/>
    </isoform>
    <isoform>
        <id>O23403-2</id>
        <name>2</name>
        <sequence type="described" ref="VSP_034344 VSP_034345"/>
    </isoform>
    <isoform>
        <id>O23403-3</id>
        <name>3</name>
        <sequence type="described" ref="VSP_034343"/>
    </isoform>
</comment>
<comment type="developmental stage">
    <text evidence="3">Highly expressed in very young leaves and then decreases with leaf age.</text>
</comment>
<comment type="disruption phenotype">
    <text evidence="3">Seedling lethal.</text>
</comment>
<comment type="similarity">
    <text evidence="4">Belongs to the PsbP family.</text>
</comment>
<protein>
    <recommendedName>
        <fullName>PsbP domain-containing protein 1, chloroplastic</fullName>
    </recommendedName>
    <alternativeName>
        <fullName>OEC23-like protein 3</fullName>
    </alternativeName>
    <alternativeName>
        <fullName>PsbP-related thylakoid lumenal protein 1</fullName>
    </alternativeName>
</protein>
<organism>
    <name type="scientific">Arabidopsis thaliana</name>
    <name type="common">Mouse-ear cress</name>
    <dbReference type="NCBI Taxonomy" id="3702"/>
    <lineage>
        <taxon>Eukaryota</taxon>
        <taxon>Viridiplantae</taxon>
        <taxon>Streptophyta</taxon>
        <taxon>Embryophyta</taxon>
        <taxon>Tracheophyta</taxon>
        <taxon>Spermatophyta</taxon>
        <taxon>Magnoliopsida</taxon>
        <taxon>eudicotyledons</taxon>
        <taxon>Gunneridae</taxon>
        <taxon>Pentapetalae</taxon>
        <taxon>rosids</taxon>
        <taxon>malvids</taxon>
        <taxon>Brassicales</taxon>
        <taxon>Brassicaceae</taxon>
        <taxon>Camelineae</taxon>
        <taxon>Arabidopsis</taxon>
    </lineage>
</organism>
<evidence type="ECO:0000255" key="1"/>
<evidence type="ECO:0000269" key="2">
    <source>
    </source>
</evidence>
<evidence type="ECO:0000269" key="3">
    <source>
    </source>
</evidence>
<evidence type="ECO:0000305" key="4"/>
<accession>O23403</accession>
<accession>Q3EA17</accession>
<accession>Q681Q6</accession>
<accession>Q8LF71</accession>
<gene>
    <name type="primary">PPD1</name>
    <name type="ordered locus">At4g15510</name>
    <name type="ORF">dl3795w</name>
    <name type="ORF">FCAALL.88</name>
</gene>
<feature type="transit peptide" description="Chloroplast" evidence="1">
    <location>
        <begin position="1"/>
        <end status="unknown"/>
    </location>
</feature>
<feature type="transit peptide" description="Thylakoid" evidence="2">
    <location>
        <begin status="unknown"/>
        <end position="104"/>
    </location>
</feature>
<feature type="chain" id="PRO_0000029587" description="PsbP domain-containing protein 1, chloroplastic">
    <location>
        <begin position="105"/>
        <end position="287"/>
    </location>
</feature>
<feature type="splice variant" id="VSP_034343" description="In isoform 3." evidence="4">
    <location>
        <begin position="1"/>
        <end position="82"/>
    </location>
</feature>
<feature type="splice variant" id="VSP_034344" description="In isoform 2." evidence="4">
    <original>NIKSYANNNELA</original>
    <variation>SQSQVPNYILLL</variation>
    <location>
        <begin position="218"/>
        <end position="229"/>
    </location>
</feature>
<feature type="splice variant" id="VSP_034345" description="In isoform 2." evidence="4">
    <location>
        <begin position="230"/>
        <end position="287"/>
    </location>
</feature>
<feature type="sequence conflict" description="In Ref. 4; AAM61572." evidence="4" ref="4">
    <original>E</original>
    <variation>D</variation>
    <location>
        <position position="252"/>
    </location>
</feature>
<name>PPD1_ARATH</name>